<sequence length="517" mass="58525">MTEPNRAQAPAQNKAAADTPAVDENKIIAERREKLAALRQQGVAFPNDFRPTHQAAALQAQYADTEQATLEAAPVEVAIAGRMMLKRVMGKASFATVQDGSGQIQFYITRDKVGEEVYAAFKHWDLGDIISARGELFRTNKGELSVQVRELRLLSKSLRPLPDKFHGLADQEMKYRQRYVDLIVSPETRNTFRARTDAISSLRRHMADAGFMEVETPMLHPIPGGAAAKPFITHHNALDMQMFLRIAPELYLKRLIVGGFERVFEINRNFRNEGVSPRHNPEFTMMEFYAAYTDYRWLMDFTEDLIRKAAIDARGSAVLTYQDRELDLSKPFHRLTICQAIQKFAPQYTDAQLADAEFLRTELKKFGVNTNAPQFLNAGLGTLQLVLFEETAESQLWEPTFIVDYPVEVSPLARASDTVPGITERFELFITGREIANGFSELNDAEDQADRFRKQVEQKDAGDEEAMYFDADYIRALEYGMPPTGGCGIGIDRLVMLLTDSPNIRDVILFPHLRKED</sequence>
<keyword id="KW-0030">Aminoacyl-tRNA synthetase</keyword>
<keyword id="KW-0067">ATP-binding</keyword>
<keyword id="KW-0963">Cytoplasm</keyword>
<keyword id="KW-0436">Ligase</keyword>
<keyword id="KW-0460">Magnesium</keyword>
<keyword id="KW-0479">Metal-binding</keyword>
<keyword id="KW-0547">Nucleotide-binding</keyword>
<keyword id="KW-0648">Protein biosynthesis</keyword>
<accession>B3R478</accession>
<organism>
    <name type="scientific">Cupriavidus taiwanensis (strain DSM 17343 / BCRC 17206 / CCUG 44338 / CIP 107171 / LMG 19424 / R1)</name>
    <name type="common">Ralstonia taiwanensis (strain LMG 19424)</name>
    <dbReference type="NCBI Taxonomy" id="977880"/>
    <lineage>
        <taxon>Bacteria</taxon>
        <taxon>Pseudomonadati</taxon>
        <taxon>Pseudomonadota</taxon>
        <taxon>Betaproteobacteria</taxon>
        <taxon>Burkholderiales</taxon>
        <taxon>Burkholderiaceae</taxon>
        <taxon>Cupriavidus</taxon>
    </lineage>
</organism>
<feature type="chain" id="PRO_1000125516" description="Lysine--tRNA ligase">
    <location>
        <begin position="1"/>
        <end position="517"/>
    </location>
</feature>
<feature type="region of interest" description="Disordered" evidence="2">
    <location>
        <begin position="1"/>
        <end position="21"/>
    </location>
</feature>
<feature type="compositionally biased region" description="Low complexity" evidence="2">
    <location>
        <begin position="7"/>
        <end position="20"/>
    </location>
</feature>
<feature type="binding site" evidence="1">
    <location>
        <position position="427"/>
    </location>
    <ligand>
        <name>Mg(2+)</name>
        <dbReference type="ChEBI" id="CHEBI:18420"/>
        <label>1</label>
    </ligand>
</feature>
<feature type="binding site" evidence="1">
    <location>
        <position position="434"/>
    </location>
    <ligand>
        <name>Mg(2+)</name>
        <dbReference type="ChEBI" id="CHEBI:18420"/>
        <label>1</label>
    </ligand>
</feature>
<feature type="binding site" evidence="1">
    <location>
        <position position="434"/>
    </location>
    <ligand>
        <name>Mg(2+)</name>
        <dbReference type="ChEBI" id="CHEBI:18420"/>
        <label>2</label>
    </ligand>
</feature>
<proteinExistence type="inferred from homology"/>
<name>SYK_CUPTR</name>
<reference key="1">
    <citation type="journal article" date="2008" name="Genome Res.">
        <title>Genome sequence of the beta-rhizobium Cupriavidus taiwanensis and comparative genomics of rhizobia.</title>
        <authorList>
            <person name="Amadou C."/>
            <person name="Pascal G."/>
            <person name="Mangenot S."/>
            <person name="Glew M."/>
            <person name="Bontemps C."/>
            <person name="Capela D."/>
            <person name="Carrere S."/>
            <person name="Cruveiller S."/>
            <person name="Dossat C."/>
            <person name="Lajus A."/>
            <person name="Marchetti M."/>
            <person name="Poinsot V."/>
            <person name="Rouy Z."/>
            <person name="Servin B."/>
            <person name="Saad M."/>
            <person name="Schenowitz C."/>
            <person name="Barbe V."/>
            <person name="Batut J."/>
            <person name="Medigue C."/>
            <person name="Masson-Boivin C."/>
        </authorList>
    </citation>
    <scope>NUCLEOTIDE SEQUENCE [LARGE SCALE GENOMIC DNA]</scope>
    <source>
        <strain>DSM 17343 / BCRC 17206 / CCUG 44338 / CIP 107171 / LMG 19424 / R1</strain>
    </source>
</reference>
<evidence type="ECO:0000255" key="1">
    <source>
        <dbReference type="HAMAP-Rule" id="MF_00252"/>
    </source>
</evidence>
<evidence type="ECO:0000256" key="2">
    <source>
        <dbReference type="SAM" id="MobiDB-lite"/>
    </source>
</evidence>
<dbReference type="EC" id="6.1.1.6" evidence="1"/>
<dbReference type="EMBL" id="CU633749">
    <property type="protein sequence ID" value="CAQ69111.1"/>
    <property type="molecule type" value="Genomic_DNA"/>
</dbReference>
<dbReference type="RefSeq" id="WP_012352439.1">
    <property type="nucleotide sequence ID" value="NC_010528.1"/>
</dbReference>
<dbReference type="SMR" id="B3R478"/>
<dbReference type="GeneID" id="29762375"/>
<dbReference type="KEGG" id="cti:RALTA_A1147"/>
<dbReference type="eggNOG" id="COG1190">
    <property type="taxonomic scope" value="Bacteria"/>
</dbReference>
<dbReference type="HOGENOM" id="CLU_008255_6_0_4"/>
<dbReference type="BioCyc" id="CTAI977880:RALTA_RS05475-MONOMER"/>
<dbReference type="Proteomes" id="UP000001692">
    <property type="component" value="Chromosome 1"/>
</dbReference>
<dbReference type="GO" id="GO:0005829">
    <property type="term" value="C:cytosol"/>
    <property type="evidence" value="ECO:0007669"/>
    <property type="project" value="TreeGrafter"/>
</dbReference>
<dbReference type="GO" id="GO:0005524">
    <property type="term" value="F:ATP binding"/>
    <property type="evidence" value="ECO:0007669"/>
    <property type="project" value="UniProtKB-UniRule"/>
</dbReference>
<dbReference type="GO" id="GO:0004824">
    <property type="term" value="F:lysine-tRNA ligase activity"/>
    <property type="evidence" value="ECO:0007669"/>
    <property type="project" value="UniProtKB-UniRule"/>
</dbReference>
<dbReference type="GO" id="GO:0000287">
    <property type="term" value="F:magnesium ion binding"/>
    <property type="evidence" value="ECO:0007669"/>
    <property type="project" value="UniProtKB-UniRule"/>
</dbReference>
<dbReference type="GO" id="GO:0000049">
    <property type="term" value="F:tRNA binding"/>
    <property type="evidence" value="ECO:0007669"/>
    <property type="project" value="TreeGrafter"/>
</dbReference>
<dbReference type="GO" id="GO:0006430">
    <property type="term" value="P:lysyl-tRNA aminoacylation"/>
    <property type="evidence" value="ECO:0007669"/>
    <property type="project" value="UniProtKB-UniRule"/>
</dbReference>
<dbReference type="CDD" id="cd00775">
    <property type="entry name" value="LysRS_core"/>
    <property type="match status" value="1"/>
</dbReference>
<dbReference type="CDD" id="cd04322">
    <property type="entry name" value="LysRS_N"/>
    <property type="match status" value="1"/>
</dbReference>
<dbReference type="FunFam" id="2.40.50.140:FF:000024">
    <property type="entry name" value="Lysine--tRNA ligase"/>
    <property type="match status" value="1"/>
</dbReference>
<dbReference type="FunFam" id="3.30.930.10:FF:000001">
    <property type="entry name" value="Lysine--tRNA ligase"/>
    <property type="match status" value="1"/>
</dbReference>
<dbReference type="Gene3D" id="3.30.930.10">
    <property type="entry name" value="Bira Bifunctional Protein, Domain 2"/>
    <property type="match status" value="1"/>
</dbReference>
<dbReference type="Gene3D" id="2.40.50.140">
    <property type="entry name" value="Nucleic acid-binding proteins"/>
    <property type="match status" value="1"/>
</dbReference>
<dbReference type="HAMAP" id="MF_00252">
    <property type="entry name" value="Lys_tRNA_synth_class2"/>
    <property type="match status" value="1"/>
</dbReference>
<dbReference type="InterPro" id="IPR004364">
    <property type="entry name" value="Aa-tRNA-synt_II"/>
</dbReference>
<dbReference type="InterPro" id="IPR006195">
    <property type="entry name" value="aa-tRNA-synth_II"/>
</dbReference>
<dbReference type="InterPro" id="IPR045864">
    <property type="entry name" value="aa-tRNA-synth_II/BPL/LPL"/>
</dbReference>
<dbReference type="InterPro" id="IPR002313">
    <property type="entry name" value="Lys-tRNA-ligase_II"/>
</dbReference>
<dbReference type="InterPro" id="IPR044136">
    <property type="entry name" value="Lys-tRNA-ligase_II_N"/>
</dbReference>
<dbReference type="InterPro" id="IPR018149">
    <property type="entry name" value="Lys-tRNA-synth_II_C"/>
</dbReference>
<dbReference type="InterPro" id="IPR012340">
    <property type="entry name" value="NA-bd_OB-fold"/>
</dbReference>
<dbReference type="InterPro" id="IPR004365">
    <property type="entry name" value="NA-bd_OB_tRNA"/>
</dbReference>
<dbReference type="NCBIfam" id="TIGR00499">
    <property type="entry name" value="lysS_bact"/>
    <property type="match status" value="1"/>
</dbReference>
<dbReference type="NCBIfam" id="NF001756">
    <property type="entry name" value="PRK00484.1"/>
    <property type="match status" value="1"/>
</dbReference>
<dbReference type="PANTHER" id="PTHR42918:SF15">
    <property type="entry name" value="LYSINE--TRNA LIGASE, CHLOROPLASTIC_MITOCHONDRIAL"/>
    <property type="match status" value="1"/>
</dbReference>
<dbReference type="PANTHER" id="PTHR42918">
    <property type="entry name" value="LYSYL-TRNA SYNTHETASE"/>
    <property type="match status" value="1"/>
</dbReference>
<dbReference type="Pfam" id="PF00152">
    <property type="entry name" value="tRNA-synt_2"/>
    <property type="match status" value="1"/>
</dbReference>
<dbReference type="Pfam" id="PF01336">
    <property type="entry name" value="tRNA_anti-codon"/>
    <property type="match status" value="1"/>
</dbReference>
<dbReference type="PRINTS" id="PR00982">
    <property type="entry name" value="TRNASYNTHLYS"/>
</dbReference>
<dbReference type="SUPFAM" id="SSF55681">
    <property type="entry name" value="Class II aaRS and biotin synthetases"/>
    <property type="match status" value="1"/>
</dbReference>
<dbReference type="SUPFAM" id="SSF50249">
    <property type="entry name" value="Nucleic acid-binding proteins"/>
    <property type="match status" value="1"/>
</dbReference>
<dbReference type="PROSITE" id="PS50862">
    <property type="entry name" value="AA_TRNA_LIGASE_II"/>
    <property type="match status" value="1"/>
</dbReference>
<comment type="catalytic activity">
    <reaction evidence="1">
        <text>tRNA(Lys) + L-lysine + ATP = L-lysyl-tRNA(Lys) + AMP + diphosphate</text>
        <dbReference type="Rhea" id="RHEA:20792"/>
        <dbReference type="Rhea" id="RHEA-COMP:9696"/>
        <dbReference type="Rhea" id="RHEA-COMP:9697"/>
        <dbReference type="ChEBI" id="CHEBI:30616"/>
        <dbReference type="ChEBI" id="CHEBI:32551"/>
        <dbReference type="ChEBI" id="CHEBI:33019"/>
        <dbReference type="ChEBI" id="CHEBI:78442"/>
        <dbReference type="ChEBI" id="CHEBI:78529"/>
        <dbReference type="ChEBI" id="CHEBI:456215"/>
        <dbReference type="EC" id="6.1.1.6"/>
    </reaction>
</comment>
<comment type="cofactor">
    <cofactor evidence="1">
        <name>Mg(2+)</name>
        <dbReference type="ChEBI" id="CHEBI:18420"/>
    </cofactor>
    <text evidence="1">Binds 3 Mg(2+) ions per subunit.</text>
</comment>
<comment type="subunit">
    <text evidence="1">Homodimer.</text>
</comment>
<comment type="subcellular location">
    <subcellularLocation>
        <location evidence="1">Cytoplasm</location>
    </subcellularLocation>
</comment>
<comment type="similarity">
    <text evidence="1">Belongs to the class-II aminoacyl-tRNA synthetase family.</text>
</comment>
<protein>
    <recommendedName>
        <fullName evidence="1">Lysine--tRNA ligase</fullName>
        <ecNumber evidence="1">6.1.1.6</ecNumber>
    </recommendedName>
    <alternativeName>
        <fullName evidence="1">Lysyl-tRNA synthetase</fullName>
        <shortName evidence="1">LysRS</shortName>
    </alternativeName>
</protein>
<gene>
    <name evidence="1" type="primary">lysS</name>
    <name type="ordered locus">RALTA_A1147</name>
</gene>